<feature type="chain" id="PRO_0000102835" description="Succinate--CoA ligase [ADP-forming] subunit beta">
    <location>
        <begin position="1"/>
        <end position="389"/>
    </location>
</feature>
<feature type="domain" description="ATP-grasp" evidence="1">
    <location>
        <begin position="9"/>
        <end position="244"/>
    </location>
</feature>
<feature type="binding site" evidence="1">
    <location>
        <position position="46"/>
    </location>
    <ligand>
        <name>ATP</name>
        <dbReference type="ChEBI" id="CHEBI:30616"/>
    </ligand>
</feature>
<feature type="binding site" evidence="1">
    <location>
        <begin position="53"/>
        <end position="55"/>
    </location>
    <ligand>
        <name>ATP</name>
        <dbReference type="ChEBI" id="CHEBI:30616"/>
    </ligand>
</feature>
<feature type="binding site" evidence="1">
    <location>
        <position position="99"/>
    </location>
    <ligand>
        <name>ATP</name>
        <dbReference type="ChEBI" id="CHEBI:30616"/>
    </ligand>
</feature>
<feature type="binding site" evidence="1">
    <location>
        <position position="102"/>
    </location>
    <ligand>
        <name>ATP</name>
        <dbReference type="ChEBI" id="CHEBI:30616"/>
    </ligand>
</feature>
<feature type="binding site" evidence="1">
    <location>
        <position position="107"/>
    </location>
    <ligand>
        <name>ATP</name>
        <dbReference type="ChEBI" id="CHEBI:30616"/>
    </ligand>
</feature>
<feature type="binding site" evidence="1">
    <location>
        <position position="199"/>
    </location>
    <ligand>
        <name>Mg(2+)</name>
        <dbReference type="ChEBI" id="CHEBI:18420"/>
    </ligand>
</feature>
<feature type="binding site" evidence="1">
    <location>
        <position position="213"/>
    </location>
    <ligand>
        <name>Mg(2+)</name>
        <dbReference type="ChEBI" id="CHEBI:18420"/>
    </ligand>
</feature>
<feature type="binding site" evidence="1">
    <location>
        <position position="264"/>
    </location>
    <ligand>
        <name>substrate</name>
        <note>ligand shared with subunit alpha</note>
    </ligand>
</feature>
<feature type="binding site" evidence="1">
    <location>
        <begin position="321"/>
        <end position="323"/>
    </location>
    <ligand>
        <name>substrate</name>
        <note>ligand shared with subunit alpha</note>
    </ligand>
</feature>
<proteinExistence type="inferred from homology"/>
<protein>
    <recommendedName>
        <fullName evidence="1">Succinate--CoA ligase [ADP-forming] subunit beta</fullName>
        <ecNumber evidence="1">6.2.1.5</ecNumber>
    </recommendedName>
    <alternativeName>
        <fullName evidence="1">Succinyl-CoA synthetase subunit beta</fullName>
        <shortName evidence="1">SCS-beta</shortName>
    </alternativeName>
</protein>
<keyword id="KW-0067">ATP-binding</keyword>
<keyword id="KW-0436">Ligase</keyword>
<keyword id="KW-0460">Magnesium</keyword>
<keyword id="KW-0479">Metal-binding</keyword>
<keyword id="KW-0547">Nucleotide-binding</keyword>
<keyword id="KW-1185">Reference proteome</keyword>
<keyword id="KW-0816">Tricarboxylic acid cycle</keyword>
<dbReference type="EC" id="6.2.1.5" evidence="1"/>
<dbReference type="EMBL" id="L42023">
    <property type="protein sequence ID" value="AAC22850.1"/>
    <property type="molecule type" value="Genomic_DNA"/>
</dbReference>
<dbReference type="PIR" id="C64189">
    <property type="entry name" value="C64189"/>
</dbReference>
<dbReference type="RefSeq" id="NP_439352.1">
    <property type="nucleotide sequence ID" value="NC_000907.1"/>
</dbReference>
<dbReference type="SMR" id="P45101"/>
<dbReference type="STRING" id="71421.HI_1196"/>
<dbReference type="EnsemblBacteria" id="AAC22850">
    <property type="protein sequence ID" value="AAC22850"/>
    <property type="gene ID" value="HI_1196"/>
</dbReference>
<dbReference type="KEGG" id="hin:HI_1196"/>
<dbReference type="PATRIC" id="fig|71421.8.peg.1248"/>
<dbReference type="eggNOG" id="COG0045">
    <property type="taxonomic scope" value="Bacteria"/>
</dbReference>
<dbReference type="HOGENOM" id="CLU_037430_0_2_6"/>
<dbReference type="OrthoDB" id="9802602at2"/>
<dbReference type="PhylomeDB" id="P45101"/>
<dbReference type="BioCyc" id="HINF71421:G1GJ1-1227-MONOMER"/>
<dbReference type="UniPathway" id="UPA00223">
    <property type="reaction ID" value="UER00999"/>
</dbReference>
<dbReference type="Proteomes" id="UP000000579">
    <property type="component" value="Chromosome"/>
</dbReference>
<dbReference type="GO" id="GO:0005829">
    <property type="term" value="C:cytosol"/>
    <property type="evidence" value="ECO:0000318"/>
    <property type="project" value="GO_Central"/>
</dbReference>
<dbReference type="GO" id="GO:0042709">
    <property type="term" value="C:succinate-CoA ligase complex"/>
    <property type="evidence" value="ECO:0000318"/>
    <property type="project" value="GO_Central"/>
</dbReference>
<dbReference type="GO" id="GO:0005524">
    <property type="term" value="F:ATP binding"/>
    <property type="evidence" value="ECO:0007669"/>
    <property type="project" value="UniProtKB-UniRule"/>
</dbReference>
<dbReference type="GO" id="GO:0000287">
    <property type="term" value="F:magnesium ion binding"/>
    <property type="evidence" value="ECO:0007669"/>
    <property type="project" value="UniProtKB-UniRule"/>
</dbReference>
<dbReference type="GO" id="GO:0004775">
    <property type="term" value="F:succinate-CoA ligase (ADP-forming) activity"/>
    <property type="evidence" value="ECO:0000318"/>
    <property type="project" value="GO_Central"/>
</dbReference>
<dbReference type="GO" id="GO:0004776">
    <property type="term" value="F:succinate-CoA ligase (GDP-forming) activity"/>
    <property type="evidence" value="ECO:0007669"/>
    <property type="project" value="RHEA"/>
</dbReference>
<dbReference type="GO" id="GO:0006104">
    <property type="term" value="P:succinyl-CoA metabolic process"/>
    <property type="evidence" value="ECO:0000318"/>
    <property type="project" value="GO_Central"/>
</dbReference>
<dbReference type="GO" id="GO:0006099">
    <property type="term" value="P:tricarboxylic acid cycle"/>
    <property type="evidence" value="ECO:0000318"/>
    <property type="project" value="GO_Central"/>
</dbReference>
<dbReference type="FunFam" id="3.30.1490.20:FF:000002">
    <property type="entry name" value="Succinate--CoA ligase [ADP-forming] subunit beta"/>
    <property type="match status" value="1"/>
</dbReference>
<dbReference type="FunFam" id="3.30.470.20:FF:000002">
    <property type="entry name" value="Succinate--CoA ligase [ADP-forming] subunit beta"/>
    <property type="match status" value="1"/>
</dbReference>
<dbReference type="FunFam" id="3.40.50.261:FF:000001">
    <property type="entry name" value="Succinate--CoA ligase [ADP-forming] subunit beta"/>
    <property type="match status" value="1"/>
</dbReference>
<dbReference type="Gene3D" id="3.30.1490.20">
    <property type="entry name" value="ATP-grasp fold, A domain"/>
    <property type="match status" value="1"/>
</dbReference>
<dbReference type="Gene3D" id="3.30.470.20">
    <property type="entry name" value="ATP-grasp fold, B domain"/>
    <property type="match status" value="1"/>
</dbReference>
<dbReference type="Gene3D" id="3.40.50.261">
    <property type="entry name" value="Succinyl-CoA synthetase domains"/>
    <property type="match status" value="1"/>
</dbReference>
<dbReference type="HAMAP" id="MF_00558">
    <property type="entry name" value="Succ_CoA_beta"/>
    <property type="match status" value="1"/>
</dbReference>
<dbReference type="InterPro" id="IPR013650">
    <property type="entry name" value="ATP-grasp_succ-CoA_synth-type"/>
</dbReference>
<dbReference type="InterPro" id="IPR013815">
    <property type="entry name" value="ATP_grasp_subdomain_1"/>
</dbReference>
<dbReference type="InterPro" id="IPR017866">
    <property type="entry name" value="Succ-CoA_synthase_bsu_CS"/>
</dbReference>
<dbReference type="InterPro" id="IPR005811">
    <property type="entry name" value="SUCC_ACL_C"/>
</dbReference>
<dbReference type="InterPro" id="IPR005809">
    <property type="entry name" value="Succ_CoA_ligase-like_bsu"/>
</dbReference>
<dbReference type="InterPro" id="IPR016102">
    <property type="entry name" value="Succinyl-CoA_synth-like"/>
</dbReference>
<dbReference type="NCBIfam" id="NF001913">
    <property type="entry name" value="PRK00696.1"/>
    <property type="match status" value="1"/>
</dbReference>
<dbReference type="NCBIfam" id="TIGR01016">
    <property type="entry name" value="sucCoAbeta"/>
    <property type="match status" value="1"/>
</dbReference>
<dbReference type="PANTHER" id="PTHR11815:SF10">
    <property type="entry name" value="SUCCINATE--COA LIGASE [GDP-FORMING] SUBUNIT BETA, MITOCHONDRIAL"/>
    <property type="match status" value="1"/>
</dbReference>
<dbReference type="PANTHER" id="PTHR11815">
    <property type="entry name" value="SUCCINYL-COA SYNTHETASE BETA CHAIN"/>
    <property type="match status" value="1"/>
</dbReference>
<dbReference type="Pfam" id="PF08442">
    <property type="entry name" value="ATP-grasp_2"/>
    <property type="match status" value="1"/>
</dbReference>
<dbReference type="Pfam" id="PF00549">
    <property type="entry name" value="Ligase_CoA"/>
    <property type="match status" value="1"/>
</dbReference>
<dbReference type="PIRSF" id="PIRSF001554">
    <property type="entry name" value="SucCS_beta"/>
    <property type="match status" value="1"/>
</dbReference>
<dbReference type="SUPFAM" id="SSF56059">
    <property type="entry name" value="Glutathione synthetase ATP-binding domain-like"/>
    <property type="match status" value="1"/>
</dbReference>
<dbReference type="SUPFAM" id="SSF52210">
    <property type="entry name" value="Succinyl-CoA synthetase domains"/>
    <property type="match status" value="1"/>
</dbReference>
<dbReference type="PROSITE" id="PS01217">
    <property type="entry name" value="SUCCINYL_COA_LIG_3"/>
    <property type="match status" value="1"/>
</dbReference>
<accession>P45101</accession>
<name>SUCC_HAEIN</name>
<comment type="function">
    <text evidence="1">Succinyl-CoA synthetase functions in the citric acid cycle (TCA), coupling the hydrolysis of succinyl-CoA to the synthesis of either ATP or GTP and thus represents the only step of substrate-level phosphorylation in the TCA. The beta subunit provides nucleotide specificity of the enzyme and binds the substrate succinate, while the binding sites for coenzyme A and phosphate are found in the alpha subunit.</text>
</comment>
<comment type="catalytic activity">
    <reaction evidence="1">
        <text>succinate + ATP + CoA = succinyl-CoA + ADP + phosphate</text>
        <dbReference type="Rhea" id="RHEA:17661"/>
        <dbReference type="ChEBI" id="CHEBI:30031"/>
        <dbReference type="ChEBI" id="CHEBI:30616"/>
        <dbReference type="ChEBI" id="CHEBI:43474"/>
        <dbReference type="ChEBI" id="CHEBI:57287"/>
        <dbReference type="ChEBI" id="CHEBI:57292"/>
        <dbReference type="ChEBI" id="CHEBI:456216"/>
        <dbReference type="EC" id="6.2.1.5"/>
    </reaction>
    <physiologicalReaction direction="right-to-left" evidence="1">
        <dbReference type="Rhea" id="RHEA:17663"/>
    </physiologicalReaction>
</comment>
<comment type="catalytic activity">
    <reaction evidence="1">
        <text>GTP + succinate + CoA = succinyl-CoA + GDP + phosphate</text>
        <dbReference type="Rhea" id="RHEA:22120"/>
        <dbReference type="ChEBI" id="CHEBI:30031"/>
        <dbReference type="ChEBI" id="CHEBI:37565"/>
        <dbReference type="ChEBI" id="CHEBI:43474"/>
        <dbReference type="ChEBI" id="CHEBI:57287"/>
        <dbReference type="ChEBI" id="CHEBI:57292"/>
        <dbReference type="ChEBI" id="CHEBI:58189"/>
    </reaction>
    <physiologicalReaction direction="right-to-left" evidence="1">
        <dbReference type="Rhea" id="RHEA:22122"/>
    </physiologicalReaction>
</comment>
<comment type="cofactor">
    <cofactor evidence="1">
        <name>Mg(2+)</name>
        <dbReference type="ChEBI" id="CHEBI:18420"/>
    </cofactor>
    <text evidence="1">Binds 1 Mg(2+) ion per subunit.</text>
</comment>
<comment type="pathway">
    <text evidence="1">Carbohydrate metabolism; tricarboxylic acid cycle; succinate from succinyl-CoA (ligase route): step 1/1.</text>
</comment>
<comment type="subunit">
    <text evidence="1">Heterotetramer of two alpha and two beta subunits.</text>
</comment>
<comment type="similarity">
    <text evidence="1">Belongs to the succinate/malate CoA ligase beta subunit family.</text>
</comment>
<organism>
    <name type="scientific">Haemophilus influenzae (strain ATCC 51907 / DSM 11121 / KW20 / Rd)</name>
    <dbReference type="NCBI Taxonomy" id="71421"/>
    <lineage>
        <taxon>Bacteria</taxon>
        <taxon>Pseudomonadati</taxon>
        <taxon>Pseudomonadota</taxon>
        <taxon>Gammaproteobacteria</taxon>
        <taxon>Pasteurellales</taxon>
        <taxon>Pasteurellaceae</taxon>
        <taxon>Haemophilus</taxon>
    </lineage>
</organism>
<gene>
    <name evidence="1" type="primary">sucC</name>
    <name type="ordered locus">HI_1196</name>
</gene>
<reference key="1">
    <citation type="journal article" date="1995" name="Science">
        <title>Whole-genome random sequencing and assembly of Haemophilus influenzae Rd.</title>
        <authorList>
            <person name="Fleischmann R.D."/>
            <person name="Adams M.D."/>
            <person name="White O."/>
            <person name="Clayton R.A."/>
            <person name="Kirkness E.F."/>
            <person name="Kerlavage A.R."/>
            <person name="Bult C.J."/>
            <person name="Tomb J.-F."/>
            <person name="Dougherty B.A."/>
            <person name="Merrick J.M."/>
            <person name="McKenney K."/>
            <person name="Sutton G.G."/>
            <person name="FitzHugh W."/>
            <person name="Fields C.A."/>
            <person name="Gocayne J.D."/>
            <person name="Scott J.D."/>
            <person name="Shirley R."/>
            <person name="Liu L.-I."/>
            <person name="Glodek A."/>
            <person name="Kelley J.M."/>
            <person name="Weidman J.F."/>
            <person name="Phillips C.A."/>
            <person name="Spriggs T."/>
            <person name="Hedblom E."/>
            <person name="Cotton M.D."/>
            <person name="Utterback T.R."/>
            <person name="Hanna M.C."/>
            <person name="Nguyen D.T."/>
            <person name="Saudek D.M."/>
            <person name="Brandon R.C."/>
            <person name="Fine L.D."/>
            <person name="Fritchman J.L."/>
            <person name="Fuhrmann J.L."/>
            <person name="Geoghagen N.S.M."/>
            <person name="Gnehm C.L."/>
            <person name="McDonald L.A."/>
            <person name="Small K.V."/>
            <person name="Fraser C.M."/>
            <person name="Smith H.O."/>
            <person name="Venter J.C."/>
        </authorList>
    </citation>
    <scope>NUCLEOTIDE SEQUENCE [LARGE SCALE GENOMIC DNA]</scope>
    <source>
        <strain>ATCC 51907 / DSM 11121 / KW20 / Rd</strain>
    </source>
</reference>
<evidence type="ECO:0000255" key="1">
    <source>
        <dbReference type="HAMAP-Rule" id="MF_00558"/>
    </source>
</evidence>
<sequence>MNLHEYQAKQLFEHYGLPVKNGAVCQSVEDVDLVLAQLSGGKWAAKCQVHAGGRGKAGGVKLVQDVEEARAFAEKWLGQRLVTFQTDKLGQPVNQIYFEETCDIDKEFYLSAVVDRTSQKVVFIASSEGGMNIEEVVQNSPHLLHKVTIDPLFGGLPYQGRELAFKLGLSGTQNKQFTDIFMGLSRLFLEKDLSLLEVNPLVLTPQGNLVCLDAKISVDDNALFRHKDLLALQDLTQNDAREAEAEKFQLNYVALEGDIGCMVNGAGLAMGTMDIVKLYGGKPANFLDVGGGATQERVAEAFKIILTDPSVKVILVNIFGGIVRCDLIAEGVIAAVNEVGVRVPVVVRLEGTNAEMGRQILAESDVNILTAQSLQQAAELAVNAAKGEH</sequence>